<protein>
    <recommendedName>
        <fullName evidence="1">D-alanine--D-alanyl carrier protein ligase</fullName>
        <shortName evidence="1">DCL</shortName>
        <ecNumber evidence="1">6.2.1.54</ecNumber>
    </recommendedName>
    <alternativeName>
        <fullName evidence="1">D-alanine--poly(phosphoribitol) ligase subunit 1</fullName>
    </alternativeName>
    <alternativeName>
        <fullName evidence="1">D-alanine-activating enzyme</fullName>
        <shortName evidence="1">DAE</shortName>
    </alternativeName>
</protein>
<accession>C0MBD6</accession>
<feature type="chain" id="PRO_1000146973" description="D-alanine--D-alanyl carrier protein ligase">
    <location>
        <begin position="1"/>
        <end position="512"/>
    </location>
</feature>
<feature type="binding site" evidence="1">
    <location>
        <begin position="152"/>
        <end position="153"/>
    </location>
    <ligand>
        <name>ATP</name>
        <dbReference type="ChEBI" id="CHEBI:30616"/>
    </ligand>
</feature>
<feature type="binding site" evidence="1">
    <location>
        <position position="199"/>
    </location>
    <ligand>
        <name>D-alanine</name>
        <dbReference type="ChEBI" id="CHEBI:57416"/>
    </ligand>
</feature>
<feature type="binding site" evidence="1">
    <location>
        <begin position="294"/>
        <end position="299"/>
    </location>
    <ligand>
        <name>ATP</name>
        <dbReference type="ChEBI" id="CHEBI:30616"/>
    </ligand>
</feature>
<feature type="binding site" evidence="1">
    <location>
        <position position="303"/>
    </location>
    <ligand>
        <name>D-alanine</name>
        <dbReference type="ChEBI" id="CHEBI:57416"/>
    </ligand>
</feature>
<feature type="binding site" evidence="1">
    <location>
        <position position="385"/>
    </location>
    <ligand>
        <name>ATP</name>
        <dbReference type="ChEBI" id="CHEBI:30616"/>
    </ligand>
</feature>
<feature type="binding site" evidence="1">
    <location>
        <begin position="397"/>
        <end position="400"/>
    </location>
    <ligand>
        <name>ATP</name>
        <dbReference type="ChEBI" id="CHEBI:30616"/>
    </ligand>
</feature>
<feature type="binding site" evidence="1">
    <location>
        <position position="499"/>
    </location>
    <ligand>
        <name>ATP</name>
        <dbReference type="ChEBI" id="CHEBI:30616"/>
    </ligand>
</feature>
<feature type="binding site" evidence="1">
    <location>
        <position position="499"/>
    </location>
    <ligand>
        <name>D-alanine</name>
        <dbReference type="ChEBI" id="CHEBI:57416"/>
    </ligand>
</feature>
<organism>
    <name type="scientific">Streptococcus equi subsp. equi (strain 4047)</name>
    <dbReference type="NCBI Taxonomy" id="553482"/>
    <lineage>
        <taxon>Bacteria</taxon>
        <taxon>Bacillati</taxon>
        <taxon>Bacillota</taxon>
        <taxon>Bacilli</taxon>
        <taxon>Lactobacillales</taxon>
        <taxon>Streptococcaceae</taxon>
        <taxon>Streptococcus</taxon>
    </lineage>
</organism>
<reference key="1">
    <citation type="journal article" date="2009" name="PLoS Pathog.">
        <title>Genomic evidence for the evolution of Streptococcus equi: host restriction, increased virulence, and genetic exchange with human pathogens.</title>
        <authorList>
            <person name="Holden M.T.G."/>
            <person name="Heather Z."/>
            <person name="Paillot R."/>
            <person name="Steward K.F."/>
            <person name="Webb K."/>
            <person name="Ainslie F."/>
            <person name="Jourdan T."/>
            <person name="Bason N.C."/>
            <person name="Holroyd N.E."/>
            <person name="Mungall K."/>
            <person name="Quail M.A."/>
            <person name="Sanders M."/>
            <person name="Simmonds M."/>
            <person name="Willey D."/>
            <person name="Brooks K."/>
            <person name="Aanensen D.M."/>
            <person name="Spratt B.G."/>
            <person name="Jolley K.A."/>
            <person name="Maiden M.C.J."/>
            <person name="Kehoe M."/>
            <person name="Chanter N."/>
            <person name="Bentley S.D."/>
            <person name="Robinson C."/>
            <person name="Maskell D.J."/>
            <person name="Parkhill J."/>
            <person name="Waller A.S."/>
        </authorList>
    </citation>
    <scope>NUCLEOTIDE SEQUENCE [LARGE SCALE GENOMIC DNA]</scope>
    <source>
        <strain>4047</strain>
    </source>
</reference>
<dbReference type="EC" id="6.2.1.54" evidence="1"/>
<dbReference type="EMBL" id="FM204883">
    <property type="protein sequence ID" value="CAW94343.1"/>
    <property type="molecule type" value="Genomic_DNA"/>
</dbReference>
<dbReference type="RefSeq" id="WP_012679765.1">
    <property type="nucleotide sequence ID" value="NC_012471.1"/>
</dbReference>
<dbReference type="SMR" id="C0MBD6"/>
<dbReference type="KEGG" id="seu:SEQ_1453"/>
<dbReference type="HOGENOM" id="CLU_000022_2_12_9"/>
<dbReference type="OrthoDB" id="9765680at2"/>
<dbReference type="UniPathway" id="UPA00556"/>
<dbReference type="Proteomes" id="UP000001365">
    <property type="component" value="Chromosome"/>
</dbReference>
<dbReference type="GO" id="GO:0005737">
    <property type="term" value="C:cytoplasm"/>
    <property type="evidence" value="ECO:0007669"/>
    <property type="project" value="UniProtKB-SubCell"/>
</dbReference>
<dbReference type="GO" id="GO:0005524">
    <property type="term" value="F:ATP binding"/>
    <property type="evidence" value="ECO:0007669"/>
    <property type="project" value="UniProtKB-KW"/>
</dbReference>
<dbReference type="GO" id="GO:0047473">
    <property type="term" value="F:D-alanine [D-alanyl carrier protein] ligase activity"/>
    <property type="evidence" value="ECO:0007669"/>
    <property type="project" value="UniProtKB-UniRule"/>
</dbReference>
<dbReference type="GO" id="GO:0070395">
    <property type="term" value="P:lipoteichoic acid biosynthetic process"/>
    <property type="evidence" value="ECO:0007669"/>
    <property type="project" value="UniProtKB-UniRule"/>
</dbReference>
<dbReference type="CDD" id="cd05945">
    <property type="entry name" value="DltA"/>
    <property type="match status" value="1"/>
</dbReference>
<dbReference type="FunFam" id="3.30.300.30:FF:000012">
    <property type="entry name" value="D-alanine--D-alanyl carrier protein ligase"/>
    <property type="match status" value="1"/>
</dbReference>
<dbReference type="Gene3D" id="3.30.300.30">
    <property type="match status" value="1"/>
</dbReference>
<dbReference type="Gene3D" id="3.40.50.12780">
    <property type="entry name" value="N-terminal domain of ligase-like"/>
    <property type="match status" value="1"/>
</dbReference>
<dbReference type="HAMAP" id="MF_00593">
    <property type="entry name" value="DltA"/>
    <property type="match status" value="1"/>
</dbReference>
<dbReference type="InterPro" id="IPR010071">
    <property type="entry name" value="AA_adenyl_dom"/>
</dbReference>
<dbReference type="InterPro" id="IPR025110">
    <property type="entry name" value="AMP-bd_C"/>
</dbReference>
<dbReference type="InterPro" id="IPR045851">
    <property type="entry name" value="AMP-bd_C_sf"/>
</dbReference>
<dbReference type="InterPro" id="IPR020845">
    <property type="entry name" value="AMP-binding_CS"/>
</dbReference>
<dbReference type="InterPro" id="IPR000873">
    <property type="entry name" value="AMP-dep_synth/lig_dom"/>
</dbReference>
<dbReference type="InterPro" id="IPR042099">
    <property type="entry name" value="ANL_N_sf"/>
</dbReference>
<dbReference type="InterPro" id="IPR010072">
    <property type="entry name" value="DltA"/>
</dbReference>
<dbReference type="InterPro" id="IPR044507">
    <property type="entry name" value="DltA-like"/>
</dbReference>
<dbReference type="NCBIfam" id="TIGR01733">
    <property type="entry name" value="AA-adenyl-dom"/>
    <property type="match status" value="1"/>
</dbReference>
<dbReference type="NCBIfam" id="TIGR01734">
    <property type="entry name" value="D-ala-DACP-lig"/>
    <property type="match status" value="1"/>
</dbReference>
<dbReference type="NCBIfam" id="NF003417">
    <property type="entry name" value="PRK04813.1"/>
    <property type="match status" value="1"/>
</dbReference>
<dbReference type="PANTHER" id="PTHR45398">
    <property type="match status" value="1"/>
</dbReference>
<dbReference type="PANTHER" id="PTHR45398:SF1">
    <property type="entry name" value="ENZYME, PUTATIVE (JCVI)-RELATED"/>
    <property type="match status" value="1"/>
</dbReference>
<dbReference type="Pfam" id="PF00501">
    <property type="entry name" value="AMP-binding"/>
    <property type="match status" value="1"/>
</dbReference>
<dbReference type="Pfam" id="PF13193">
    <property type="entry name" value="AMP-binding_C"/>
    <property type="match status" value="1"/>
</dbReference>
<dbReference type="SUPFAM" id="SSF56801">
    <property type="entry name" value="Acetyl-CoA synthetase-like"/>
    <property type="match status" value="1"/>
</dbReference>
<dbReference type="PROSITE" id="PS00455">
    <property type="entry name" value="AMP_BINDING"/>
    <property type="match status" value="1"/>
</dbReference>
<name>DLTA_STRE4</name>
<evidence type="ECO:0000255" key="1">
    <source>
        <dbReference type="HAMAP-Rule" id="MF_00593"/>
    </source>
</evidence>
<keyword id="KW-0067">ATP-binding</keyword>
<keyword id="KW-0963">Cytoplasm</keyword>
<keyword id="KW-0436">Ligase</keyword>
<keyword id="KW-0547">Nucleotide-binding</keyword>
<gene>
    <name evidence="1" type="primary">dltA</name>
    <name type="ordered locus">SEQ_1453</name>
</gene>
<sequence length="512" mass="56952">MVNDMIETIEYFAQAQPDFPVYDCLGERRSYGQLKEDSDSIAALIESLKLGEKSPVLVFGAQSYDMLASFVALTKTGHAYIPVDVHSAPERVLSIIEIAQPSLIIAIEELPVSIDAIRVVSLAEIEAAKAAKAAFTMTSPVKGDDNYYIIFTSGTTGQPKGVQISHANLLSFTNWMIEDAEFAIPERPQMLAQPPYSFDLSVMYWAPTLALGGTLFALPKEMVSDFKRLFSTIAELPIGIWTSTPSFADMAMLNDDFCQEKMPRLTHFYFDGEELTVSTARKLFERFPDARIINAYGPTEATVALSAISITKDMIETYTRLPIGYPKPDSPTYIIDEAGNALEPGQQGEIIVTGPAVSKGYLNNPEKTAEAFFTFNGMPAYHTGDLGSFTEDNVLLYGGRLDFQIKYAGYRIELEDVSQQLNQSPLVESAVAVPRYNKEHKVQNLLAYVVLKDGVREQFARDLDITKAIKASVKDHMMAYMMPSKFIYREKLPLTPNGKIDIKFLINEVNHQ</sequence>
<comment type="function">
    <text evidence="1">Catalyzes the first step in the D-alanylation of lipoteichoic acid (LTA), the activation of D-alanine and its transfer onto the D-alanyl carrier protein (Dcp) DltC. In an ATP-dependent two-step reaction, forms a high energy D-alanyl-AMP intermediate, followed by transfer of the D-alanyl residue as a thiol ester to the phosphopantheinyl prosthetic group of the Dcp. D-alanylation of LTA plays an important role in modulating the properties of the cell wall in Gram-positive bacteria, influencing the net charge of the cell wall.</text>
</comment>
<comment type="catalytic activity">
    <reaction evidence="1">
        <text>holo-[D-alanyl-carrier protein] + D-alanine + ATP = D-alanyl-[D-alanyl-carrier protein] + AMP + diphosphate</text>
        <dbReference type="Rhea" id="RHEA:55132"/>
        <dbReference type="Rhea" id="RHEA-COMP:14102"/>
        <dbReference type="Rhea" id="RHEA-COMP:14103"/>
        <dbReference type="ChEBI" id="CHEBI:30616"/>
        <dbReference type="ChEBI" id="CHEBI:33019"/>
        <dbReference type="ChEBI" id="CHEBI:57416"/>
        <dbReference type="ChEBI" id="CHEBI:64479"/>
        <dbReference type="ChEBI" id="CHEBI:138620"/>
        <dbReference type="ChEBI" id="CHEBI:456215"/>
        <dbReference type="EC" id="6.2.1.54"/>
    </reaction>
</comment>
<comment type="pathway">
    <text evidence="1">Cell wall biogenesis; lipoteichoic acid biosynthesis.</text>
</comment>
<comment type="subcellular location">
    <subcellularLocation>
        <location evidence="1">Cytoplasm</location>
    </subcellularLocation>
</comment>
<comment type="similarity">
    <text evidence="1">Belongs to the ATP-dependent AMP-binding enzyme family. DltA subfamily.</text>
</comment>
<proteinExistence type="inferred from homology"/>